<organismHost>
    <name type="scientific">Gallus gallus</name>
    <name type="common">Chicken</name>
    <dbReference type="NCBI Taxonomy" id="9031"/>
</organismHost>
<organismHost>
    <name type="scientific">Meleagris gallopavo</name>
    <name type="common">Wild turkey</name>
    <dbReference type="NCBI Taxonomy" id="9103"/>
</organismHost>
<organism>
    <name type="scientific">Meleagrid herpesvirus 1 (strain FC126)</name>
    <name type="common">MeHV-1</name>
    <name type="synonym">Turkey herpesvirus</name>
    <dbReference type="NCBI Taxonomy" id="10391"/>
    <lineage>
        <taxon>Viruses</taxon>
        <taxon>Duplodnaviria</taxon>
        <taxon>Heunggongvirae</taxon>
        <taxon>Peploviricota</taxon>
        <taxon>Herviviricetes</taxon>
        <taxon>Herpesvirales</taxon>
        <taxon>Orthoherpesviridae</taxon>
        <taxon>Alphaherpesvirinae</taxon>
        <taxon>Mardivirus</taxon>
        <taxon>Mardivirus gallidalpha2</taxon>
        <taxon>Gallid alphaherpesvirus 2</taxon>
    </lineage>
</organism>
<evidence type="ECO:0000255" key="1"/>
<evidence type="ECO:0000256" key="2">
    <source>
        <dbReference type="SAM" id="MobiDB-lite"/>
    </source>
</evidence>
<evidence type="ECO:0000305" key="3"/>
<gene>
    <name type="primary">gC</name>
    <name type="ORF">GA</name>
</gene>
<dbReference type="EMBL" id="M27832">
    <property type="protein sequence ID" value="AAA46110.1"/>
    <property type="molecule type" value="mRNA"/>
</dbReference>
<dbReference type="PIR" id="JE0066">
    <property type="entry name" value="VGBETC"/>
</dbReference>
<dbReference type="GlyCosmos" id="P13374">
    <property type="glycosylation" value="4 sites, No reported glycans"/>
</dbReference>
<dbReference type="Gene3D" id="2.60.40.10">
    <property type="entry name" value="Immunoglobulins"/>
    <property type="match status" value="1"/>
</dbReference>
<dbReference type="InterPro" id="IPR007110">
    <property type="entry name" value="Ig-like_dom"/>
</dbReference>
<dbReference type="InterPro" id="IPR036179">
    <property type="entry name" value="Ig-like_dom_sf"/>
</dbReference>
<dbReference type="InterPro" id="IPR013783">
    <property type="entry name" value="Ig-like_fold"/>
</dbReference>
<dbReference type="InterPro" id="IPR001654">
    <property type="entry name" value="Marek_A"/>
</dbReference>
<dbReference type="PRINTS" id="PR00675">
    <property type="entry name" value="MAREKSGPA"/>
</dbReference>
<dbReference type="SUPFAM" id="SSF48726">
    <property type="entry name" value="Immunoglobulin"/>
    <property type="match status" value="1"/>
</dbReference>
<dbReference type="PROSITE" id="PS50835">
    <property type="entry name" value="IG_LIKE"/>
    <property type="match status" value="1"/>
</dbReference>
<keyword id="KW-0325">Glycoprotein</keyword>
<keyword id="KW-0945">Host-virus interaction</keyword>
<keyword id="KW-0393">Immunoglobulin domain</keyword>
<keyword id="KW-0732">Signal</keyword>
<protein>
    <recommendedName>
        <fullName>Envelope glycoprotein C homolog</fullName>
    </recommendedName>
    <alternativeName>
        <fullName>A antigen</fullName>
    </alternativeName>
    <alternativeName>
        <fullName>Glycoprotein A</fullName>
    </alternativeName>
</protein>
<reference key="1">
    <citation type="journal article" date="1989" name="Gene">
        <title>Characterization of a highly transcribed DNA region of herpesvirus of turkeys.</title>
        <authorList>
            <person name="Bandyopadhyay P.K."/>
        </authorList>
    </citation>
    <scope>NUCLEOTIDE SEQUENCE [MRNA]</scope>
</reference>
<feature type="signal peptide" evidence="1">
    <location>
        <begin position="1"/>
        <end position="25"/>
    </location>
</feature>
<feature type="chain" id="PRO_0000038210" description="Envelope glycoprotein C homolog">
    <location>
        <begin position="26"/>
        <end position="373"/>
    </location>
</feature>
<feature type="domain" description="Ig-like">
    <location>
        <begin position="249"/>
        <end position="347"/>
    </location>
</feature>
<feature type="region of interest" description="Disordered" evidence="2">
    <location>
        <begin position="58"/>
        <end position="93"/>
    </location>
</feature>
<feature type="compositionally biased region" description="Polar residues" evidence="2">
    <location>
        <begin position="59"/>
        <end position="68"/>
    </location>
</feature>
<feature type="compositionally biased region" description="Low complexity" evidence="2">
    <location>
        <begin position="69"/>
        <end position="80"/>
    </location>
</feature>
<feature type="glycosylation site" description="N-linked (GlcNAc...) asparagine; by host" evidence="1">
    <location>
        <position position="91"/>
    </location>
</feature>
<feature type="glycosylation site" description="N-linked (GlcNAc...) asparagine; by host" evidence="1">
    <location>
        <position position="111"/>
    </location>
</feature>
<feature type="glycosylation site" description="N-linked (GlcNAc...) asparagine; by host" evidence="1">
    <location>
        <position position="203"/>
    </location>
</feature>
<feature type="glycosylation site" description="N-linked (GlcNAc...) asparagine; by host" evidence="1">
    <location>
        <position position="345"/>
    </location>
</feature>
<proteinExistence type="evidence at transcript level"/>
<name>GC_MEHVF</name>
<comment type="similarity">
    <text evidence="3">Belongs to the herpesviridae glycoprotein C family.</text>
</comment>
<sequence>MVSNMRSTRTALTGWVGIFLVLSLQQTSCAGLPHNVDTHHILTFNPSPISADGVPLSEVPNSPTTELSTTVATKTAVPTTESTSSSEAHRNSSHKIPDIICDREEVFVFLNNTGRILCDLIVDPPSDDEWSNFALDVTFNPIEYHANEKNVEVARVAGLYGVPGSDYAYPRKSELISSIRRDPQGSFWTSPTPRGNKYFIWINKTMHTMGVEVRNVDYKDNGYFQVILRDRFNRPLVEKHIYMRVCQRPASVDVLAPPVLSGENYKASCIVRHFYPPGSVYVSWRRNGNIATPRKDRDGSFWWFESGRGATLVSTITLGNSGLESPPKVSCLVAWRQGDMISTSNATAVPTVYYHPRISLAFKDGSLQDHRSL</sequence>
<accession>P13374</accession>